<organism>
    <name type="scientific">Mycobacterium tuberculosis (strain ATCC 25618 / H37Rv)</name>
    <dbReference type="NCBI Taxonomy" id="83332"/>
    <lineage>
        <taxon>Bacteria</taxon>
        <taxon>Bacillati</taxon>
        <taxon>Actinomycetota</taxon>
        <taxon>Actinomycetes</taxon>
        <taxon>Mycobacteriales</taxon>
        <taxon>Mycobacteriaceae</taxon>
        <taxon>Mycobacterium</taxon>
        <taxon>Mycobacterium tuberculosis complex</taxon>
    </lineage>
</organism>
<feature type="chain" id="PRO_0000130910" description="Small ribosomal subunit protein uS14B">
    <location>
        <begin position="1"/>
        <end position="61"/>
    </location>
</feature>
<feature type="binding site" evidence="1">
    <location>
        <position position="24"/>
    </location>
    <ligand>
        <name>Zn(2+)</name>
        <dbReference type="ChEBI" id="CHEBI:29105"/>
    </ligand>
</feature>
<feature type="binding site" evidence="1">
    <location>
        <position position="27"/>
    </location>
    <ligand>
        <name>Zn(2+)</name>
        <dbReference type="ChEBI" id="CHEBI:29105"/>
    </ligand>
</feature>
<feature type="binding site" evidence="1">
    <location>
        <position position="40"/>
    </location>
    <ligand>
        <name>Zn(2+)</name>
        <dbReference type="ChEBI" id="CHEBI:29105"/>
    </ligand>
</feature>
<feature type="binding site" evidence="1">
    <location>
        <position position="43"/>
    </location>
    <ligand>
        <name>Zn(2+)</name>
        <dbReference type="ChEBI" id="CHEBI:29105"/>
    </ligand>
</feature>
<evidence type="ECO:0000255" key="1">
    <source>
        <dbReference type="HAMAP-Rule" id="MF_01364"/>
    </source>
</evidence>
<evidence type="ECO:0000305" key="2"/>
<proteinExistence type="evidence at protein level"/>
<dbReference type="EMBL" id="AL123456">
    <property type="protein sequence ID" value="CCP43461.1"/>
    <property type="molecule type" value="Genomic_DNA"/>
</dbReference>
<dbReference type="PIR" id="H70643">
    <property type="entry name" value="H70643"/>
</dbReference>
<dbReference type="RefSeq" id="WP_003403667.1">
    <property type="nucleotide sequence ID" value="NZ_NVQJ01000007.1"/>
</dbReference>
<dbReference type="RefSeq" id="YP_177747.1">
    <property type="nucleotide sequence ID" value="NC_000962.3"/>
</dbReference>
<dbReference type="PDB" id="5V93">
    <property type="method" value="EM"/>
    <property type="resolution" value="4.00 A"/>
    <property type="chains" value="n=1-61"/>
</dbReference>
<dbReference type="PDB" id="7KGB">
    <property type="method" value="EM"/>
    <property type="resolution" value="2.70 A"/>
    <property type="chains" value="n=1-61"/>
</dbReference>
<dbReference type="PDB" id="7MSC">
    <property type="method" value="EM"/>
    <property type="resolution" value="2.97 A"/>
    <property type="chains" value="n=1-61"/>
</dbReference>
<dbReference type="PDB" id="7MSH">
    <property type="method" value="EM"/>
    <property type="resolution" value="3.23 A"/>
    <property type="chains" value="n=1-61"/>
</dbReference>
<dbReference type="PDB" id="7MSM">
    <property type="method" value="EM"/>
    <property type="resolution" value="2.79 A"/>
    <property type="chains" value="n=1-61"/>
</dbReference>
<dbReference type="PDB" id="7MSZ">
    <property type="method" value="EM"/>
    <property type="resolution" value="3.10 A"/>
    <property type="chains" value="n=1-61"/>
</dbReference>
<dbReference type="PDB" id="7MT2">
    <property type="method" value="EM"/>
    <property type="resolution" value="2.76 A"/>
    <property type="chains" value="n=1-61"/>
</dbReference>
<dbReference type="PDB" id="7MT3">
    <property type="method" value="EM"/>
    <property type="resolution" value="2.80 A"/>
    <property type="chains" value="n=1-61"/>
</dbReference>
<dbReference type="PDB" id="7MT7">
    <property type="method" value="EM"/>
    <property type="resolution" value="2.71 A"/>
    <property type="chains" value="n=1-61"/>
</dbReference>
<dbReference type="PDB" id="7SFR">
    <property type="method" value="EM"/>
    <property type="resolution" value="2.60 A"/>
    <property type="chains" value="n=1-61"/>
</dbReference>
<dbReference type="PDBsum" id="5V93"/>
<dbReference type="PDBsum" id="7KGB"/>
<dbReference type="PDBsum" id="7MSC"/>
<dbReference type="PDBsum" id="7MSH"/>
<dbReference type="PDBsum" id="7MSM"/>
<dbReference type="PDBsum" id="7MSZ"/>
<dbReference type="PDBsum" id="7MT2"/>
<dbReference type="PDBsum" id="7MT3"/>
<dbReference type="PDBsum" id="7MT7"/>
<dbReference type="PDBsum" id="7SFR"/>
<dbReference type="EMDB" id="EMD-22865"/>
<dbReference type="EMDB" id="EMD-23961"/>
<dbReference type="EMDB" id="EMD-23962"/>
<dbReference type="EMDB" id="EMD-23969"/>
<dbReference type="EMDB" id="EMD-23972"/>
<dbReference type="EMDB" id="EMD-23974"/>
<dbReference type="EMDB" id="EMD-23975"/>
<dbReference type="EMDB" id="EMD-23976"/>
<dbReference type="EMDB" id="EMD-8645"/>
<dbReference type="SMR" id="P9WH57"/>
<dbReference type="FunCoup" id="P9WH57">
    <property type="interactions" value="81"/>
</dbReference>
<dbReference type="STRING" id="83332.Rv0717"/>
<dbReference type="PaxDb" id="83332-Rv0717"/>
<dbReference type="DNASU" id="888414"/>
<dbReference type="GeneID" id="888414"/>
<dbReference type="KEGG" id="mtu:Rv0717"/>
<dbReference type="KEGG" id="mtv:RVBD_0717"/>
<dbReference type="TubercuList" id="Rv0717"/>
<dbReference type="eggNOG" id="COG0199">
    <property type="taxonomic scope" value="Bacteria"/>
</dbReference>
<dbReference type="InParanoid" id="P9WH57"/>
<dbReference type="OrthoDB" id="9810484at2"/>
<dbReference type="PhylomeDB" id="P9WH57"/>
<dbReference type="PRO" id="PR:P9WH57"/>
<dbReference type="Proteomes" id="UP000001584">
    <property type="component" value="Chromosome"/>
</dbReference>
<dbReference type="GO" id="GO:0005737">
    <property type="term" value="C:cytoplasm"/>
    <property type="evidence" value="ECO:0007669"/>
    <property type="project" value="UniProtKB-ARBA"/>
</dbReference>
<dbReference type="GO" id="GO:0015935">
    <property type="term" value="C:small ribosomal subunit"/>
    <property type="evidence" value="ECO:0000318"/>
    <property type="project" value="GO_Central"/>
</dbReference>
<dbReference type="GO" id="GO:0019843">
    <property type="term" value="F:rRNA binding"/>
    <property type="evidence" value="ECO:0007669"/>
    <property type="project" value="UniProtKB-UniRule"/>
</dbReference>
<dbReference type="GO" id="GO:0003735">
    <property type="term" value="F:structural constituent of ribosome"/>
    <property type="evidence" value="ECO:0000318"/>
    <property type="project" value="GO_Central"/>
</dbReference>
<dbReference type="GO" id="GO:0008270">
    <property type="term" value="F:zinc ion binding"/>
    <property type="evidence" value="ECO:0007669"/>
    <property type="project" value="UniProtKB-UniRule"/>
</dbReference>
<dbReference type="GO" id="GO:0006412">
    <property type="term" value="P:translation"/>
    <property type="evidence" value="ECO:0000318"/>
    <property type="project" value="GO_Central"/>
</dbReference>
<dbReference type="FunFam" id="4.10.830.10:FF:000001">
    <property type="entry name" value="30S ribosomal protein S14 type Z"/>
    <property type="match status" value="1"/>
</dbReference>
<dbReference type="Gene3D" id="4.10.830.10">
    <property type="entry name" value="30s Ribosomal Protein S14, Chain N"/>
    <property type="match status" value="1"/>
</dbReference>
<dbReference type="HAMAP" id="MF_01364_B">
    <property type="entry name" value="Ribosomal_uS14_2_B"/>
    <property type="match status" value="1"/>
</dbReference>
<dbReference type="InterPro" id="IPR001209">
    <property type="entry name" value="Ribosomal_uS14"/>
</dbReference>
<dbReference type="InterPro" id="IPR023053">
    <property type="entry name" value="Ribosomal_uS14_bact"/>
</dbReference>
<dbReference type="InterPro" id="IPR018271">
    <property type="entry name" value="Ribosomal_uS14_CS"/>
</dbReference>
<dbReference type="InterPro" id="IPR043140">
    <property type="entry name" value="Ribosomal_uS14_sf"/>
</dbReference>
<dbReference type="NCBIfam" id="NF005974">
    <property type="entry name" value="PRK08061.1"/>
    <property type="match status" value="1"/>
</dbReference>
<dbReference type="PANTHER" id="PTHR19836">
    <property type="entry name" value="30S RIBOSOMAL PROTEIN S14"/>
    <property type="match status" value="1"/>
</dbReference>
<dbReference type="PANTHER" id="PTHR19836:SF19">
    <property type="entry name" value="SMALL RIBOSOMAL SUBUNIT PROTEIN US14M"/>
    <property type="match status" value="1"/>
</dbReference>
<dbReference type="Pfam" id="PF00253">
    <property type="entry name" value="Ribosomal_S14"/>
    <property type="match status" value="1"/>
</dbReference>
<dbReference type="SUPFAM" id="SSF57716">
    <property type="entry name" value="Glucocorticoid receptor-like (DNA-binding domain)"/>
    <property type="match status" value="1"/>
</dbReference>
<dbReference type="PROSITE" id="PS00527">
    <property type="entry name" value="RIBOSOMAL_S14"/>
    <property type="match status" value="1"/>
</dbReference>
<sequence>MAKKALVNKAAGKPRFAVRAYTRCSKCGRPRAVYRKFGLCRICLREMAHAGELPGVQKSSW</sequence>
<gene>
    <name evidence="1" type="primary">rpsZ</name>
    <name evidence="1" type="synonym">rpsN1</name>
    <name type="ordered locus">Rv0717</name>
    <name type="ORF">MTCY210.36</name>
</gene>
<keyword id="KW-0002">3D-structure</keyword>
<keyword id="KW-0479">Metal-binding</keyword>
<keyword id="KW-1185">Reference proteome</keyword>
<keyword id="KW-0687">Ribonucleoprotein</keyword>
<keyword id="KW-0689">Ribosomal protein</keyword>
<keyword id="KW-0694">RNA-binding</keyword>
<keyword id="KW-0699">rRNA-binding</keyword>
<keyword id="KW-0862">Zinc</keyword>
<protein>
    <recommendedName>
        <fullName evidence="1">Small ribosomal subunit protein uS14B</fullName>
    </recommendedName>
    <alternativeName>
        <fullName evidence="2">30S ribosomal protein S14 type Z</fullName>
    </alternativeName>
</protein>
<name>RS14Z_MYCTU</name>
<reference key="1">
    <citation type="journal article" date="1998" name="Nature">
        <title>Deciphering the biology of Mycobacterium tuberculosis from the complete genome sequence.</title>
        <authorList>
            <person name="Cole S.T."/>
            <person name="Brosch R."/>
            <person name="Parkhill J."/>
            <person name="Garnier T."/>
            <person name="Churcher C.M."/>
            <person name="Harris D.E."/>
            <person name="Gordon S.V."/>
            <person name="Eiglmeier K."/>
            <person name="Gas S."/>
            <person name="Barry C.E. III"/>
            <person name="Tekaia F."/>
            <person name="Badcock K."/>
            <person name="Basham D."/>
            <person name="Brown D."/>
            <person name="Chillingworth T."/>
            <person name="Connor R."/>
            <person name="Davies R.M."/>
            <person name="Devlin K."/>
            <person name="Feltwell T."/>
            <person name="Gentles S."/>
            <person name="Hamlin N."/>
            <person name="Holroyd S."/>
            <person name="Hornsby T."/>
            <person name="Jagels K."/>
            <person name="Krogh A."/>
            <person name="McLean J."/>
            <person name="Moule S."/>
            <person name="Murphy L.D."/>
            <person name="Oliver S."/>
            <person name="Osborne J."/>
            <person name="Quail M.A."/>
            <person name="Rajandream M.A."/>
            <person name="Rogers J."/>
            <person name="Rutter S."/>
            <person name="Seeger K."/>
            <person name="Skelton S."/>
            <person name="Squares S."/>
            <person name="Squares R."/>
            <person name="Sulston J.E."/>
            <person name="Taylor K."/>
            <person name="Whitehead S."/>
            <person name="Barrell B.G."/>
        </authorList>
    </citation>
    <scope>NUCLEOTIDE SEQUENCE [LARGE SCALE GENOMIC DNA]</scope>
    <source>
        <strain>ATCC 25618 / H37Rv</strain>
    </source>
</reference>
<reference key="2">
    <citation type="journal article" date="2011" name="Mol. Cell. Proteomics">
        <title>Proteogenomic analysis of Mycobacterium tuberculosis by high resolution mass spectrometry.</title>
        <authorList>
            <person name="Kelkar D.S."/>
            <person name="Kumar D."/>
            <person name="Kumar P."/>
            <person name="Balakrishnan L."/>
            <person name="Muthusamy B."/>
            <person name="Yadav A.K."/>
            <person name="Shrivastava P."/>
            <person name="Marimuthu A."/>
            <person name="Anand S."/>
            <person name="Sundaram H."/>
            <person name="Kingsbury R."/>
            <person name="Harsha H.C."/>
            <person name="Nair B."/>
            <person name="Prasad T.S."/>
            <person name="Chauhan D.S."/>
            <person name="Katoch K."/>
            <person name="Katoch V.M."/>
            <person name="Kumar P."/>
            <person name="Chaerkady R."/>
            <person name="Ramachandran S."/>
            <person name="Dash D."/>
            <person name="Pandey A."/>
        </authorList>
    </citation>
    <scope>IDENTIFICATION BY MASS SPECTROMETRY [LARGE SCALE ANALYSIS]</scope>
    <source>
        <strain>ATCC 25618 / H37Rv</strain>
    </source>
</reference>
<accession>P9WH57</accession>
<accession>L0T4N2</accession>
<accession>P0A5X2</accession>
<accession>P95065</accession>
<comment type="function">
    <text evidence="1">Binds 16S rRNA, required for the assembly of 30S particles and may also be responsible for determining the conformation of the 16S rRNA at the A site.</text>
</comment>
<comment type="cofactor">
    <cofactor evidence="1">
        <name>Zn(2+)</name>
        <dbReference type="ChEBI" id="CHEBI:29105"/>
    </cofactor>
    <text evidence="1">Binds 1 zinc ion per subunit.</text>
</comment>
<comment type="subunit">
    <text evidence="1">Part of the 30S ribosomal subunit. Contacts proteins S3 and S10.</text>
</comment>
<comment type="similarity">
    <text evidence="1">Belongs to the universal ribosomal protein uS14 family. Zinc-binding uS14 subfamily.</text>
</comment>